<evidence type="ECO:0000255" key="1">
    <source>
        <dbReference type="HAMAP-Rule" id="MF_01698"/>
    </source>
</evidence>
<organism>
    <name type="scientific">Rhodococcus erythropolis (strain PR4 / NBRC 100887)</name>
    <dbReference type="NCBI Taxonomy" id="234621"/>
    <lineage>
        <taxon>Bacteria</taxon>
        <taxon>Bacillati</taxon>
        <taxon>Actinomycetota</taxon>
        <taxon>Actinomycetes</taxon>
        <taxon>Mycobacteriales</taxon>
        <taxon>Nocardiaceae</taxon>
        <taxon>Rhodococcus</taxon>
        <taxon>Rhodococcus erythropolis group</taxon>
    </lineage>
</organism>
<protein>
    <recommendedName>
        <fullName evidence="1">Mycothiol acetyltransferase</fullName>
        <shortName evidence="1">MSH acetyltransferase</shortName>
        <ecNumber evidence="1">2.3.1.189</ecNumber>
    </recommendedName>
    <alternativeName>
        <fullName evidence="1">Mycothiol synthase</fullName>
    </alternativeName>
</protein>
<comment type="function">
    <text evidence="1">Catalyzes the transfer of acetyl from acetyl-CoA to desacetylmycothiol (Cys-GlcN-Ins) to form mycothiol.</text>
</comment>
<comment type="catalytic activity">
    <reaction evidence="1">
        <text>1D-myo-inositol 2-(L-cysteinylamino)-2-deoxy-alpha-D-glucopyranoside + acetyl-CoA = mycothiol + CoA + H(+)</text>
        <dbReference type="Rhea" id="RHEA:26172"/>
        <dbReference type="ChEBI" id="CHEBI:15378"/>
        <dbReference type="ChEBI" id="CHEBI:16768"/>
        <dbReference type="ChEBI" id="CHEBI:57287"/>
        <dbReference type="ChEBI" id="CHEBI:57288"/>
        <dbReference type="ChEBI" id="CHEBI:58887"/>
        <dbReference type="EC" id="2.3.1.189"/>
    </reaction>
</comment>
<comment type="subunit">
    <text evidence="1">Monomer.</text>
</comment>
<comment type="similarity">
    <text evidence="1">Belongs to the acetyltransferase family. MshD subfamily.</text>
</comment>
<reference key="1">
    <citation type="submission" date="2005-03" db="EMBL/GenBank/DDBJ databases">
        <title>Comparison of the complete genome sequences of Rhodococcus erythropolis PR4 and Rhodococcus opacus B4.</title>
        <authorList>
            <person name="Takarada H."/>
            <person name="Sekine M."/>
            <person name="Hosoyama A."/>
            <person name="Yamada R."/>
            <person name="Fujisawa T."/>
            <person name="Omata S."/>
            <person name="Shimizu A."/>
            <person name="Tsukatani N."/>
            <person name="Tanikawa S."/>
            <person name="Fujita N."/>
            <person name="Harayama S."/>
        </authorList>
    </citation>
    <scope>NUCLEOTIDE SEQUENCE [LARGE SCALE GENOMIC DNA]</scope>
    <source>
        <strain>PR4 / NBRC 100887</strain>
    </source>
</reference>
<gene>
    <name evidence="1" type="primary">mshD</name>
    <name type="ordered locus">RER_48050</name>
</gene>
<dbReference type="EC" id="2.3.1.189" evidence="1"/>
<dbReference type="EMBL" id="AP008957">
    <property type="protein sequence ID" value="BAH35513.1"/>
    <property type="molecule type" value="Genomic_DNA"/>
</dbReference>
<dbReference type="SMR" id="C0ZP17"/>
<dbReference type="KEGG" id="rer:RER_48050"/>
<dbReference type="eggNOG" id="COG0454">
    <property type="taxonomic scope" value="Bacteria"/>
</dbReference>
<dbReference type="eggNOG" id="COG0456">
    <property type="taxonomic scope" value="Bacteria"/>
</dbReference>
<dbReference type="HOGENOM" id="CLU_068014_0_0_11"/>
<dbReference type="Proteomes" id="UP000002204">
    <property type="component" value="Chromosome"/>
</dbReference>
<dbReference type="GO" id="GO:0035447">
    <property type="term" value="F:mycothiol synthase activity"/>
    <property type="evidence" value="ECO:0007669"/>
    <property type="project" value="UniProtKB-UniRule"/>
</dbReference>
<dbReference type="GO" id="GO:0008999">
    <property type="term" value="F:protein-N-terminal-alanine acetyltransferase activity"/>
    <property type="evidence" value="ECO:0007669"/>
    <property type="project" value="TreeGrafter"/>
</dbReference>
<dbReference type="GO" id="GO:0010125">
    <property type="term" value="P:mycothiol biosynthetic process"/>
    <property type="evidence" value="ECO:0007669"/>
    <property type="project" value="UniProtKB-UniRule"/>
</dbReference>
<dbReference type="CDD" id="cd04301">
    <property type="entry name" value="NAT_SF"/>
    <property type="match status" value="2"/>
</dbReference>
<dbReference type="Gene3D" id="3.40.630.30">
    <property type="match status" value="1"/>
</dbReference>
<dbReference type="HAMAP" id="MF_01698">
    <property type="entry name" value="MshD"/>
    <property type="match status" value="1"/>
</dbReference>
<dbReference type="InterPro" id="IPR016181">
    <property type="entry name" value="Acyl_CoA_acyltransferase"/>
</dbReference>
<dbReference type="InterPro" id="IPR000182">
    <property type="entry name" value="GNAT_dom"/>
</dbReference>
<dbReference type="InterPro" id="IPR050276">
    <property type="entry name" value="MshD_Acetyltransferase"/>
</dbReference>
<dbReference type="InterPro" id="IPR017813">
    <property type="entry name" value="Mycothiol_AcTrfase"/>
</dbReference>
<dbReference type="NCBIfam" id="TIGR03448">
    <property type="entry name" value="mycothiol_MshD"/>
    <property type="match status" value="1"/>
</dbReference>
<dbReference type="PANTHER" id="PTHR43617">
    <property type="entry name" value="L-AMINO ACID N-ACETYLTRANSFERASE"/>
    <property type="match status" value="1"/>
</dbReference>
<dbReference type="PANTHER" id="PTHR43617:SF31">
    <property type="entry name" value="MYCOTHIOL ACETYLTRANSFERASE"/>
    <property type="match status" value="1"/>
</dbReference>
<dbReference type="Pfam" id="PF00583">
    <property type="entry name" value="Acetyltransf_1"/>
    <property type="match status" value="2"/>
</dbReference>
<dbReference type="PIRSF" id="PIRSF021524">
    <property type="entry name" value="MSH_acetyltransferase"/>
    <property type="match status" value="1"/>
</dbReference>
<dbReference type="SUPFAM" id="SSF55729">
    <property type="entry name" value="Acyl-CoA N-acyltransferases (Nat)"/>
    <property type="match status" value="1"/>
</dbReference>
<dbReference type="PROSITE" id="PS51186">
    <property type="entry name" value="GNAT"/>
    <property type="match status" value="2"/>
</dbReference>
<name>MSHD_RHOE4</name>
<accession>C0ZP17</accession>
<proteinExistence type="inferred from homology"/>
<keyword id="KW-0012">Acyltransferase</keyword>
<keyword id="KW-0677">Repeat</keyword>
<keyword id="KW-0808">Transferase</keyword>
<sequence>MGWTDSLPAGSAEQVSALLDRATEFDGKAPVSEQGRHAVAGRGAARHFVELDGDTVVGYAQLQAGSDEHPDMAELVVDPQARRRGIGTRLAAAVFDEGRPGTRVWAHGNVDAAVEFAKSLDLVSVRELLQLRRPLDAPQLPEIVVPEGVTMRTYRGPEDDSEILRVNNAAFSWHPEQGGWTQAEIDERTAEGWFDPAGLFMAFADTDPDTLLGFHWTKVHAPEGDDPELGEVYVVGIDPAAQGRGLGRVLTLAGMHYLRDRGLGTVLLYVEGDNTAALHTYERLGFDRFHVDMAYARAL</sequence>
<feature type="chain" id="PRO_0000400290" description="Mycothiol acetyltransferase">
    <location>
        <begin position="1"/>
        <end position="299"/>
    </location>
</feature>
<feature type="domain" description="N-acetyltransferase 1" evidence="1">
    <location>
        <begin position="1"/>
        <end position="156"/>
    </location>
</feature>
<feature type="domain" description="N-acetyltransferase 2" evidence="1">
    <location>
        <begin position="149"/>
        <end position="299"/>
    </location>
</feature>
<feature type="binding site" evidence="1">
    <location>
        <position position="33"/>
    </location>
    <ligand>
        <name>1D-myo-inositol 2-(L-cysteinylamino)-2-deoxy-alpha-D-glucopyranoside</name>
        <dbReference type="ChEBI" id="CHEBI:58887"/>
    </ligand>
</feature>
<feature type="binding site" evidence="1">
    <location>
        <begin position="75"/>
        <end position="77"/>
    </location>
    <ligand>
        <name>acetyl-CoA</name>
        <dbReference type="ChEBI" id="CHEBI:57288"/>
        <label>1</label>
    </ligand>
</feature>
<feature type="binding site" evidence="1">
    <location>
        <begin position="83"/>
        <end position="88"/>
    </location>
    <ligand>
        <name>acetyl-CoA</name>
        <dbReference type="ChEBI" id="CHEBI:57288"/>
        <label>1</label>
    </ligand>
</feature>
<feature type="binding site" evidence="1">
    <location>
        <position position="176"/>
    </location>
    <ligand>
        <name>1D-myo-inositol 2-(L-cysteinylamino)-2-deoxy-alpha-D-glucopyranoside</name>
        <dbReference type="ChEBI" id="CHEBI:58887"/>
    </ligand>
</feature>
<feature type="binding site" evidence="1">
    <location>
        <position position="218"/>
    </location>
    <ligand>
        <name>1D-myo-inositol 2-(L-cysteinylamino)-2-deoxy-alpha-D-glucopyranoside</name>
        <dbReference type="ChEBI" id="CHEBI:58887"/>
    </ligand>
</feature>
<feature type="binding site" evidence="1">
    <location>
        <position position="231"/>
    </location>
    <ligand>
        <name>1D-myo-inositol 2-(L-cysteinylamino)-2-deoxy-alpha-D-glucopyranoside</name>
        <dbReference type="ChEBI" id="CHEBI:58887"/>
    </ligand>
</feature>
<feature type="binding site" evidence="1">
    <location>
        <begin position="235"/>
        <end position="237"/>
    </location>
    <ligand>
        <name>acetyl-CoA</name>
        <dbReference type="ChEBI" id="CHEBI:57288"/>
        <label>2</label>
    </ligand>
</feature>
<feature type="binding site" evidence="1">
    <location>
        <begin position="242"/>
        <end position="248"/>
    </location>
    <ligand>
        <name>acetyl-CoA</name>
        <dbReference type="ChEBI" id="CHEBI:57288"/>
        <label>2</label>
    </ligand>
</feature>
<feature type="binding site" evidence="1">
    <location>
        <position position="269"/>
    </location>
    <ligand>
        <name>1D-myo-inositol 2-(L-cysteinylamino)-2-deoxy-alpha-D-glucopyranoside</name>
        <dbReference type="ChEBI" id="CHEBI:58887"/>
    </ligand>
</feature>
<feature type="binding site" evidence="1">
    <location>
        <begin position="274"/>
        <end position="279"/>
    </location>
    <ligand>
        <name>acetyl-CoA</name>
        <dbReference type="ChEBI" id="CHEBI:57288"/>
        <label>2</label>
    </ligand>
</feature>